<keyword id="KW-0012">Acyltransferase</keyword>
<keyword id="KW-0256">Endoplasmic reticulum</keyword>
<keyword id="KW-0449">Lipoprotein</keyword>
<keyword id="KW-0472">Membrane</keyword>
<keyword id="KW-0564">Palmitate</keyword>
<keyword id="KW-1185">Reference proteome</keyword>
<keyword id="KW-0808">Transferase</keyword>
<keyword id="KW-0812">Transmembrane</keyword>
<keyword id="KW-1133">Transmembrane helix</keyword>
<comment type="function">
    <text evidence="1">Palmitoyltransferase that targets several endosomal SNAREs. Palmitoylates the SNAREs at cysteine residues close to the cytoplasmic end of their transmembrane domain. May have a role in the cellular quality control of transmembrane domain-containing proteins (By similarity).</text>
</comment>
<comment type="catalytic activity">
    <reaction>
        <text>L-cysteinyl-[protein] + hexadecanoyl-CoA = S-hexadecanoyl-L-cysteinyl-[protein] + CoA</text>
        <dbReference type="Rhea" id="RHEA:36683"/>
        <dbReference type="Rhea" id="RHEA-COMP:10131"/>
        <dbReference type="Rhea" id="RHEA-COMP:11032"/>
        <dbReference type="ChEBI" id="CHEBI:29950"/>
        <dbReference type="ChEBI" id="CHEBI:57287"/>
        <dbReference type="ChEBI" id="CHEBI:57379"/>
        <dbReference type="ChEBI" id="CHEBI:74151"/>
        <dbReference type="EC" id="2.3.1.225"/>
    </reaction>
</comment>
<comment type="subcellular location">
    <subcellularLocation>
        <location evidence="1">Endoplasmic reticulum membrane</location>
        <topology evidence="1">Multi-pass membrane protein</topology>
    </subcellularLocation>
</comment>
<comment type="domain">
    <text evidence="1">The DHHC domain is required for palmitoyltransferase activity.</text>
</comment>
<comment type="similarity">
    <text evidence="4">Belongs to the DHHC palmitoyltransferase family. SWF1 subfamily.</text>
</comment>
<feature type="chain" id="PRO_0000212992" description="Palmitoyltransferase swf1">
    <location>
        <begin position="1"/>
        <end position="356"/>
    </location>
</feature>
<feature type="topological domain" description="Lumenal" evidence="2">
    <location>
        <begin position="1"/>
        <end position="2"/>
    </location>
</feature>
<feature type="transmembrane region" description="Helical" evidence="2">
    <location>
        <begin position="3"/>
        <end position="23"/>
    </location>
</feature>
<feature type="topological domain" description="Cytoplasmic" evidence="2">
    <location>
        <begin position="24"/>
        <end position="78"/>
    </location>
</feature>
<feature type="transmembrane region" description="Helical" evidence="2">
    <location>
        <begin position="79"/>
        <end position="99"/>
    </location>
</feature>
<feature type="topological domain" description="Lumenal" evidence="2">
    <location>
        <begin position="100"/>
        <end position="107"/>
    </location>
</feature>
<feature type="transmembrane region" description="Helical" evidence="2">
    <location>
        <begin position="108"/>
        <end position="128"/>
    </location>
</feature>
<feature type="topological domain" description="Cytoplasmic" evidence="2">
    <location>
        <begin position="129"/>
        <end position="201"/>
    </location>
</feature>
<feature type="transmembrane region" description="Helical" evidence="2">
    <location>
        <begin position="202"/>
        <end position="222"/>
    </location>
</feature>
<feature type="topological domain" description="Lumenal" evidence="2">
    <location>
        <begin position="223"/>
        <end position="253"/>
    </location>
</feature>
<feature type="transmembrane region" description="Helical" evidence="2">
    <location>
        <begin position="254"/>
        <end position="274"/>
    </location>
</feature>
<feature type="topological domain" description="Cytoplasmic" evidence="2">
    <location>
        <begin position="275"/>
        <end position="356"/>
    </location>
</feature>
<feature type="domain" description="DHHC" evidence="3">
    <location>
        <begin position="158"/>
        <end position="208"/>
    </location>
</feature>
<protein>
    <recommendedName>
        <fullName>Palmitoyltransferase swf1</fullName>
        <ecNumber>2.3.1.225</ecNumber>
    </recommendedName>
</protein>
<evidence type="ECO:0000250" key="1"/>
<evidence type="ECO:0000255" key="2"/>
<evidence type="ECO:0000255" key="3">
    <source>
        <dbReference type="PROSITE-ProRule" id="PRU00067"/>
    </source>
</evidence>
<evidence type="ECO:0000305" key="4"/>
<sequence>MDFFYKYLALVAIASLMVFILLFGQIPKLKYTVIGKLNRFFMVTIPYHLHVLDSRYADGRCSAAMRSLSNYVLYKNNPLVVFLYLALITIGIASFFIYGSSLTQKFSIIDWISVLTSVLLPYISLYIAAKSNPGKIDLKNWNEASRRFPYDYKIFFPNKCSTCKFEKPARSKHCRLCNICVEKFDHHCIWINNCVGLNNARYFFLFLLCTIQLLFHSILRLGYHFNALRDMRQYPSFLRSWWFAIKSEGELGSVFLISLICSVLVLCLLGYEFFLVYAGYTTNESEKWSDLAHLVKNRKVYMYYENGSQLLALDKDASNDAILVTSMSQIDNIYDNGFYNNFFSLVFPYRHLYSTT</sequence>
<proteinExistence type="inferred from homology"/>
<organism>
    <name type="scientific">Schizosaccharomyces pombe (strain 972 / ATCC 24843)</name>
    <name type="common">Fission yeast</name>
    <dbReference type="NCBI Taxonomy" id="284812"/>
    <lineage>
        <taxon>Eukaryota</taxon>
        <taxon>Fungi</taxon>
        <taxon>Dikarya</taxon>
        <taxon>Ascomycota</taxon>
        <taxon>Taphrinomycotina</taxon>
        <taxon>Schizosaccharomycetes</taxon>
        <taxon>Schizosaccharomycetales</taxon>
        <taxon>Schizosaccharomycetaceae</taxon>
        <taxon>Schizosaccharomyces</taxon>
    </lineage>
</organism>
<gene>
    <name type="primary">swf1</name>
    <name type="ORF">SPBC13G1.07</name>
</gene>
<accession>O60069</accession>
<dbReference type="EC" id="2.3.1.225"/>
<dbReference type="EMBL" id="CU329671">
    <property type="protein sequence ID" value="CAA18660.1"/>
    <property type="molecule type" value="Genomic_DNA"/>
</dbReference>
<dbReference type="PIR" id="T39408">
    <property type="entry name" value="T39408"/>
</dbReference>
<dbReference type="RefSeq" id="NP_596556.1">
    <property type="nucleotide sequence ID" value="NM_001022477.2"/>
</dbReference>
<dbReference type="SMR" id="O60069"/>
<dbReference type="FunCoup" id="O60069">
    <property type="interactions" value="261"/>
</dbReference>
<dbReference type="STRING" id="284812.O60069"/>
<dbReference type="PaxDb" id="4896-SPBC13G1.07.1"/>
<dbReference type="EnsemblFungi" id="SPBC13G1.07.1">
    <property type="protein sequence ID" value="SPBC13G1.07.1:pep"/>
    <property type="gene ID" value="SPBC13G1.07"/>
</dbReference>
<dbReference type="GeneID" id="2539719"/>
<dbReference type="KEGG" id="spo:2539719"/>
<dbReference type="PomBase" id="SPBC13G1.07">
    <property type="gene designation" value="swf1"/>
</dbReference>
<dbReference type="VEuPathDB" id="FungiDB:SPBC13G1.07"/>
<dbReference type="eggNOG" id="KOG1312">
    <property type="taxonomic scope" value="Eukaryota"/>
</dbReference>
<dbReference type="HOGENOM" id="CLU_042181_0_0_1"/>
<dbReference type="InParanoid" id="O60069"/>
<dbReference type="OMA" id="HIYLIWA"/>
<dbReference type="PhylomeDB" id="O60069"/>
<dbReference type="PRO" id="PR:O60069"/>
<dbReference type="Proteomes" id="UP000002485">
    <property type="component" value="Chromosome II"/>
</dbReference>
<dbReference type="GO" id="GO:0005783">
    <property type="term" value="C:endoplasmic reticulum"/>
    <property type="evidence" value="ECO:0000314"/>
    <property type="project" value="PomBase"/>
</dbReference>
<dbReference type="GO" id="GO:0005789">
    <property type="term" value="C:endoplasmic reticulum membrane"/>
    <property type="evidence" value="ECO:0000250"/>
    <property type="project" value="PomBase"/>
</dbReference>
<dbReference type="GO" id="GO:0005794">
    <property type="term" value="C:Golgi apparatus"/>
    <property type="evidence" value="ECO:0007005"/>
    <property type="project" value="PomBase"/>
</dbReference>
<dbReference type="GO" id="GO:0019706">
    <property type="term" value="F:protein-cysteine S-palmitoyltransferase activity"/>
    <property type="evidence" value="ECO:0000318"/>
    <property type="project" value="GO_Central"/>
</dbReference>
<dbReference type="GO" id="GO:0006612">
    <property type="term" value="P:protein targeting to membrane"/>
    <property type="evidence" value="ECO:0000318"/>
    <property type="project" value="GO_Central"/>
</dbReference>
<dbReference type="InterPro" id="IPR001594">
    <property type="entry name" value="Palmitoyltrfase_DHHC"/>
</dbReference>
<dbReference type="InterPro" id="IPR039859">
    <property type="entry name" value="PFA4/ZDH16/20/ERF2-like"/>
</dbReference>
<dbReference type="PANTHER" id="PTHR22883:SF488">
    <property type="entry name" value="PALMITOYLTRANSFERASE"/>
    <property type="match status" value="1"/>
</dbReference>
<dbReference type="PANTHER" id="PTHR22883">
    <property type="entry name" value="ZINC FINGER DHHC DOMAIN CONTAINING PROTEIN"/>
    <property type="match status" value="1"/>
</dbReference>
<dbReference type="Pfam" id="PF01529">
    <property type="entry name" value="DHHC"/>
    <property type="match status" value="1"/>
</dbReference>
<dbReference type="PROSITE" id="PS50216">
    <property type="entry name" value="DHHC"/>
    <property type="match status" value="1"/>
</dbReference>
<reference key="1">
    <citation type="journal article" date="2002" name="Nature">
        <title>The genome sequence of Schizosaccharomyces pombe.</title>
        <authorList>
            <person name="Wood V."/>
            <person name="Gwilliam R."/>
            <person name="Rajandream M.A."/>
            <person name="Lyne M.H."/>
            <person name="Lyne R."/>
            <person name="Stewart A."/>
            <person name="Sgouros J.G."/>
            <person name="Peat N."/>
            <person name="Hayles J."/>
            <person name="Baker S.G."/>
            <person name="Basham D."/>
            <person name="Bowman S."/>
            <person name="Brooks K."/>
            <person name="Brown D."/>
            <person name="Brown S."/>
            <person name="Chillingworth T."/>
            <person name="Churcher C.M."/>
            <person name="Collins M."/>
            <person name="Connor R."/>
            <person name="Cronin A."/>
            <person name="Davis P."/>
            <person name="Feltwell T."/>
            <person name="Fraser A."/>
            <person name="Gentles S."/>
            <person name="Goble A."/>
            <person name="Hamlin N."/>
            <person name="Harris D.E."/>
            <person name="Hidalgo J."/>
            <person name="Hodgson G."/>
            <person name="Holroyd S."/>
            <person name="Hornsby T."/>
            <person name="Howarth S."/>
            <person name="Huckle E.J."/>
            <person name="Hunt S."/>
            <person name="Jagels K."/>
            <person name="James K.D."/>
            <person name="Jones L."/>
            <person name="Jones M."/>
            <person name="Leather S."/>
            <person name="McDonald S."/>
            <person name="McLean J."/>
            <person name="Mooney P."/>
            <person name="Moule S."/>
            <person name="Mungall K.L."/>
            <person name="Murphy L.D."/>
            <person name="Niblett D."/>
            <person name="Odell C."/>
            <person name="Oliver K."/>
            <person name="O'Neil S."/>
            <person name="Pearson D."/>
            <person name="Quail M.A."/>
            <person name="Rabbinowitsch E."/>
            <person name="Rutherford K.M."/>
            <person name="Rutter S."/>
            <person name="Saunders D."/>
            <person name="Seeger K."/>
            <person name="Sharp S."/>
            <person name="Skelton J."/>
            <person name="Simmonds M.N."/>
            <person name="Squares R."/>
            <person name="Squares S."/>
            <person name="Stevens K."/>
            <person name="Taylor K."/>
            <person name="Taylor R.G."/>
            <person name="Tivey A."/>
            <person name="Walsh S.V."/>
            <person name="Warren T."/>
            <person name="Whitehead S."/>
            <person name="Woodward J.R."/>
            <person name="Volckaert G."/>
            <person name="Aert R."/>
            <person name="Robben J."/>
            <person name="Grymonprez B."/>
            <person name="Weltjens I."/>
            <person name="Vanstreels E."/>
            <person name="Rieger M."/>
            <person name="Schaefer M."/>
            <person name="Mueller-Auer S."/>
            <person name="Gabel C."/>
            <person name="Fuchs M."/>
            <person name="Duesterhoeft A."/>
            <person name="Fritzc C."/>
            <person name="Holzer E."/>
            <person name="Moestl D."/>
            <person name="Hilbert H."/>
            <person name="Borzym K."/>
            <person name="Langer I."/>
            <person name="Beck A."/>
            <person name="Lehrach H."/>
            <person name="Reinhardt R."/>
            <person name="Pohl T.M."/>
            <person name="Eger P."/>
            <person name="Zimmermann W."/>
            <person name="Wedler H."/>
            <person name="Wambutt R."/>
            <person name="Purnelle B."/>
            <person name="Goffeau A."/>
            <person name="Cadieu E."/>
            <person name="Dreano S."/>
            <person name="Gloux S."/>
            <person name="Lelaure V."/>
            <person name="Mottier S."/>
            <person name="Galibert F."/>
            <person name="Aves S.J."/>
            <person name="Xiang Z."/>
            <person name="Hunt C."/>
            <person name="Moore K."/>
            <person name="Hurst S.M."/>
            <person name="Lucas M."/>
            <person name="Rochet M."/>
            <person name="Gaillardin C."/>
            <person name="Tallada V.A."/>
            <person name="Garzon A."/>
            <person name="Thode G."/>
            <person name="Daga R.R."/>
            <person name="Cruzado L."/>
            <person name="Jimenez J."/>
            <person name="Sanchez M."/>
            <person name="del Rey F."/>
            <person name="Benito J."/>
            <person name="Dominguez A."/>
            <person name="Revuelta J.L."/>
            <person name="Moreno S."/>
            <person name="Armstrong J."/>
            <person name="Forsburg S.L."/>
            <person name="Cerutti L."/>
            <person name="Lowe T."/>
            <person name="McCombie W.R."/>
            <person name="Paulsen I."/>
            <person name="Potashkin J."/>
            <person name="Shpakovski G.V."/>
            <person name="Ussery D."/>
            <person name="Barrell B.G."/>
            <person name="Nurse P."/>
        </authorList>
    </citation>
    <scope>NUCLEOTIDE SEQUENCE [LARGE SCALE GENOMIC DNA]</scope>
    <source>
        <strain>972 / ATCC 24843</strain>
    </source>
</reference>
<name>SWF1_SCHPO</name>